<organism>
    <name type="scientific">Aeromonas hydrophila subsp. hydrophila (strain ATCC 7966 / DSM 30187 / BCRC 13018 / CCUG 14551 / JCM 1027 / KCTC 2358 / NCIMB 9240 / NCTC 8049)</name>
    <dbReference type="NCBI Taxonomy" id="380703"/>
    <lineage>
        <taxon>Bacteria</taxon>
        <taxon>Pseudomonadati</taxon>
        <taxon>Pseudomonadota</taxon>
        <taxon>Gammaproteobacteria</taxon>
        <taxon>Aeromonadales</taxon>
        <taxon>Aeromonadaceae</taxon>
        <taxon>Aeromonas</taxon>
    </lineage>
</organism>
<keyword id="KW-0963">Cytoplasm</keyword>
<keyword id="KW-0520">NAD</keyword>
<keyword id="KW-0560">Oxidoreductase</keyword>
<keyword id="KW-0664">Pyridoxine biosynthesis</keyword>
<keyword id="KW-1185">Reference proteome</keyword>
<evidence type="ECO:0000255" key="1">
    <source>
        <dbReference type="HAMAP-Rule" id="MF_01825"/>
    </source>
</evidence>
<sequence>MKIVVDENMPHARELFAEFGEVIPLPGRQMLATDLQEADVLLVRSVTRVDAALLASCPRLSFVGTATIGTDHVDKGLLAERGIPFFSAPGCNKYSVGDYVLSALLVLAERHELNLGAMSLAVIGAGNTGECVAGKAEALGMRVLRCDPPRARAAEANEAAQFVDYQQALEADIVSFHVPITRQGPDATFHLLDAAQIAARPAGQILINASRGEVWDNQALLARQQSQAPLRLVMDVWEGEPEPLQALVPHTELATPHIAGYSLEGKARGTWMLYEALCRQLRRTPRQDLQSLLPIPEVREVTPGQSADQALIKQLVHLIYDVRRDDARFRNRLGVAGSFDEQRKHYPERRELSSLQLKGPFAGAALARLGFVCQPD</sequence>
<feature type="chain" id="PRO_0000297430" description="Erythronate-4-phosphate dehydrogenase">
    <location>
        <begin position="1"/>
        <end position="376"/>
    </location>
</feature>
<feature type="active site" evidence="1">
    <location>
        <position position="211"/>
    </location>
</feature>
<feature type="active site" evidence="1">
    <location>
        <position position="240"/>
    </location>
</feature>
<feature type="active site" description="Proton donor" evidence="1">
    <location>
        <position position="257"/>
    </location>
</feature>
<feature type="binding site" evidence="1">
    <location>
        <position position="45"/>
    </location>
    <ligand>
        <name>substrate</name>
    </ligand>
</feature>
<feature type="binding site" evidence="1">
    <location>
        <position position="67"/>
    </location>
    <ligand>
        <name>substrate</name>
    </ligand>
</feature>
<feature type="binding site" evidence="1">
    <location>
        <position position="147"/>
    </location>
    <ligand>
        <name>NAD(+)</name>
        <dbReference type="ChEBI" id="CHEBI:57540"/>
    </ligand>
</feature>
<feature type="binding site" evidence="1">
    <location>
        <begin position="209"/>
        <end position="211"/>
    </location>
    <ligand>
        <name>NAD(+)</name>
        <dbReference type="ChEBI" id="CHEBI:57540"/>
    </ligand>
</feature>
<feature type="binding site" evidence="1">
    <location>
        <position position="235"/>
    </location>
    <ligand>
        <name>NAD(+)</name>
        <dbReference type="ChEBI" id="CHEBI:57540"/>
    </ligand>
</feature>
<feature type="binding site" evidence="1">
    <location>
        <position position="260"/>
    </location>
    <ligand>
        <name>NAD(+)</name>
        <dbReference type="ChEBI" id="CHEBI:57540"/>
    </ligand>
</feature>
<feature type="binding site" evidence="1">
    <location>
        <position position="261"/>
    </location>
    <ligand>
        <name>substrate</name>
    </ligand>
</feature>
<comment type="function">
    <text evidence="1">Catalyzes the oxidation of erythronate-4-phosphate to 3-hydroxy-2-oxo-4-phosphonooxybutanoate.</text>
</comment>
<comment type="catalytic activity">
    <reaction evidence="1">
        <text>4-phospho-D-erythronate + NAD(+) = (R)-3-hydroxy-2-oxo-4-phosphooxybutanoate + NADH + H(+)</text>
        <dbReference type="Rhea" id="RHEA:18829"/>
        <dbReference type="ChEBI" id="CHEBI:15378"/>
        <dbReference type="ChEBI" id="CHEBI:57540"/>
        <dbReference type="ChEBI" id="CHEBI:57945"/>
        <dbReference type="ChEBI" id="CHEBI:58538"/>
        <dbReference type="ChEBI" id="CHEBI:58766"/>
        <dbReference type="EC" id="1.1.1.290"/>
    </reaction>
</comment>
<comment type="pathway">
    <text evidence="1">Cofactor biosynthesis; pyridoxine 5'-phosphate biosynthesis; pyridoxine 5'-phosphate from D-erythrose 4-phosphate: step 2/5.</text>
</comment>
<comment type="subunit">
    <text evidence="1">Homodimer.</text>
</comment>
<comment type="subcellular location">
    <subcellularLocation>
        <location evidence="1">Cytoplasm</location>
    </subcellularLocation>
</comment>
<comment type="similarity">
    <text evidence="1">Belongs to the D-isomer specific 2-hydroxyacid dehydrogenase family. PdxB subfamily.</text>
</comment>
<dbReference type="EC" id="1.1.1.290" evidence="1"/>
<dbReference type="EMBL" id="CP000462">
    <property type="protein sequence ID" value="ABK37289.1"/>
    <property type="molecule type" value="Genomic_DNA"/>
</dbReference>
<dbReference type="RefSeq" id="WP_011706497.1">
    <property type="nucleotide sequence ID" value="NC_008570.1"/>
</dbReference>
<dbReference type="RefSeq" id="YP_857191.1">
    <property type="nucleotide sequence ID" value="NC_008570.1"/>
</dbReference>
<dbReference type="SMR" id="A0KLP0"/>
<dbReference type="STRING" id="380703.AHA_2683"/>
<dbReference type="EnsemblBacteria" id="ABK37289">
    <property type="protein sequence ID" value="ABK37289"/>
    <property type="gene ID" value="AHA_2683"/>
</dbReference>
<dbReference type="GeneID" id="4490660"/>
<dbReference type="KEGG" id="aha:AHA_2683"/>
<dbReference type="PATRIC" id="fig|380703.7.peg.2689"/>
<dbReference type="eggNOG" id="COG0111">
    <property type="taxonomic scope" value="Bacteria"/>
</dbReference>
<dbReference type="HOGENOM" id="CLU_019796_4_0_6"/>
<dbReference type="OrthoDB" id="9770208at2"/>
<dbReference type="UniPathway" id="UPA00244">
    <property type="reaction ID" value="UER00310"/>
</dbReference>
<dbReference type="Proteomes" id="UP000000756">
    <property type="component" value="Chromosome"/>
</dbReference>
<dbReference type="GO" id="GO:0005829">
    <property type="term" value="C:cytosol"/>
    <property type="evidence" value="ECO:0007669"/>
    <property type="project" value="TreeGrafter"/>
</dbReference>
<dbReference type="GO" id="GO:0033711">
    <property type="term" value="F:4-phosphoerythronate dehydrogenase activity"/>
    <property type="evidence" value="ECO:0007669"/>
    <property type="project" value="UniProtKB-EC"/>
</dbReference>
<dbReference type="GO" id="GO:0051287">
    <property type="term" value="F:NAD binding"/>
    <property type="evidence" value="ECO:0007669"/>
    <property type="project" value="InterPro"/>
</dbReference>
<dbReference type="GO" id="GO:0046983">
    <property type="term" value="F:protein dimerization activity"/>
    <property type="evidence" value="ECO:0007669"/>
    <property type="project" value="InterPro"/>
</dbReference>
<dbReference type="GO" id="GO:0036001">
    <property type="term" value="P:'de novo' pyridoxal 5'-phosphate biosynthetic process"/>
    <property type="evidence" value="ECO:0007669"/>
    <property type="project" value="TreeGrafter"/>
</dbReference>
<dbReference type="GO" id="GO:0008615">
    <property type="term" value="P:pyridoxine biosynthetic process"/>
    <property type="evidence" value="ECO:0007669"/>
    <property type="project" value="UniProtKB-UniRule"/>
</dbReference>
<dbReference type="CDD" id="cd12158">
    <property type="entry name" value="ErythrP_dh"/>
    <property type="match status" value="1"/>
</dbReference>
<dbReference type="Gene3D" id="3.30.1370.170">
    <property type="match status" value="1"/>
</dbReference>
<dbReference type="Gene3D" id="3.40.50.720">
    <property type="entry name" value="NAD(P)-binding Rossmann-like Domain"/>
    <property type="match status" value="2"/>
</dbReference>
<dbReference type="HAMAP" id="MF_01825">
    <property type="entry name" value="PdxB"/>
    <property type="match status" value="1"/>
</dbReference>
<dbReference type="InterPro" id="IPR006139">
    <property type="entry name" value="D-isomer_2_OHA_DH_cat_dom"/>
</dbReference>
<dbReference type="InterPro" id="IPR006140">
    <property type="entry name" value="D-isomer_DH_NAD-bd"/>
</dbReference>
<dbReference type="InterPro" id="IPR020921">
    <property type="entry name" value="Erythronate-4-P_DHase"/>
</dbReference>
<dbReference type="InterPro" id="IPR024531">
    <property type="entry name" value="Erythronate-4-P_DHase_dimer"/>
</dbReference>
<dbReference type="InterPro" id="IPR036291">
    <property type="entry name" value="NAD(P)-bd_dom_sf"/>
</dbReference>
<dbReference type="InterPro" id="IPR038251">
    <property type="entry name" value="PdxB_dimer_sf"/>
</dbReference>
<dbReference type="PANTHER" id="PTHR42938">
    <property type="entry name" value="FORMATE DEHYDROGENASE 1"/>
    <property type="match status" value="1"/>
</dbReference>
<dbReference type="PANTHER" id="PTHR42938:SF9">
    <property type="entry name" value="FORMATE DEHYDROGENASE 1"/>
    <property type="match status" value="1"/>
</dbReference>
<dbReference type="Pfam" id="PF00389">
    <property type="entry name" value="2-Hacid_dh"/>
    <property type="match status" value="1"/>
</dbReference>
<dbReference type="Pfam" id="PF02826">
    <property type="entry name" value="2-Hacid_dh_C"/>
    <property type="match status" value="1"/>
</dbReference>
<dbReference type="Pfam" id="PF11890">
    <property type="entry name" value="DUF3410"/>
    <property type="match status" value="1"/>
</dbReference>
<dbReference type="SUPFAM" id="SSF52283">
    <property type="entry name" value="Formate/glycerate dehydrogenase catalytic domain-like"/>
    <property type="match status" value="1"/>
</dbReference>
<dbReference type="SUPFAM" id="SSF51735">
    <property type="entry name" value="NAD(P)-binding Rossmann-fold domains"/>
    <property type="match status" value="1"/>
</dbReference>
<gene>
    <name evidence="1" type="primary">pdxB</name>
    <name type="ordered locus">AHA_2683</name>
</gene>
<accession>A0KLP0</accession>
<protein>
    <recommendedName>
        <fullName evidence="1">Erythronate-4-phosphate dehydrogenase</fullName>
        <ecNumber evidence="1">1.1.1.290</ecNumber>
    </recommendedName>
</protein>
<proteinExistence type="inferred from homology"/>
<name>PDXB_AERHH</name>
<reference key="1">
    <citation type="journal article" date="2006" name="J. Bacteriol.">
        <title>Genome sequence of Aeromonas hydrophila ATCC 7966T: jack of all trades.</title>
        <authorList>
            <person name="Seshadri R."/>
            <person name="Joseph S.W."/>
            <person name="Chopra A.K."/>
            <person name="Sha J."/>
            <person name="Shaw J."/>
            <person name="Graf J."/>
            <person name="Haft D.H."/>
            <person name="Wu M."/>
            <person name="Ren Q."/>
            <person name="Rosovitz M.J."/>
            <person name="Madupu R."/>
            <person name="Tallon L."/>
            <person name="Kim M."/>
            <person name="Jin S."/>
            <person name="Vuong H."/>
            <person name="Stine O.C."/>
            <person name="Ali A."/>
            <person name="Horneman A.J."/>
            <person name="Heidelberg J.F."/>
        </authorList>
    </citation>
    <scope>NUCLEOTIDE SEQUENCE [LARGE SCALE GENOMIC DNA]</scope>
    <source>
        <strain>ATCC 7966 / DSM 30187 / BCRC 13018 / CCUG 14551 / JCM 1027 / KCTC 2358 / NCIMB 9240 / NCTC 8049</strain>
    </source>
</reference>